<keyword id="KW-0472">Membrane</keyword>
<keyword id="KW-0520">NAD</keyword>
<keyword id="KW-0521">NADP</keyword>
<keyword id="KW-0618">Plastoquinone</keyword>
<keyword id="KW-0874">Quinone</keyword>
<keyword id="KW-0793">Thylakoid</keyword>
<keyword id="KW-1278">Translocase</keyword>
<keyword id="KW-0812">Transmembrane</keyword>
<keyword id="KW-1133">Transmembrane helix</keyword>
<keyword id="KW-0813">Transport</keyword>
<reference key="1">
    <citation type="journal article" date="2003" name="Nature">
        <title>The genome of a motile marine Synechococcus.</title>
        <authorList>
            <person name="Palenik B."/>
            <person name="Brahamsha B."/>
            <person name="Larimer F.W."/>
            <person name="Land M.L."/>
            <person name="Hauser L."/>
            <person name="Chain P."/>
            <person name="Lamerdin J.E."/>
            <person name="Regala W."/>
            <person name="Allen E.E."/>
            <person name="McCarren J."/>
            <person name="Paulsen I.T."/>
            <person name="Dufresne A."/>
            <person name="Partensky F."/>
            <person name="Webb E.A."/>
            <person name="Waterbury J."/>
        </authorList>
    </citation>
    <scope>NUCLEOTIDE SEQUENCE [LARGE SCALE GENOMIC DNA]</scope>
    <source>
        <strain>WH8102</strain>
    </source>
</reference>
<evidence type="ECO:0000255" key="1">
    <source>
        <dbReference type="HAMAP-Rule" id="MF_01355"/>
    </source>
</evidence>
<dbReference type="EC" id="7.1.1.-" evidence="1"/>
<dbReference type="EMBL" id="BX569693">
    <property type="protein sequence ID" value="CAE08036.1"/>
    <property type="molecule type" value="Genomic_DNA"/>
</dbReference>
<dbReference type="RefSeq" id="WP_011128385.1">
    <property type="nucleotide sequence ID" value="NC_005070.1"/>
</dbReference>
<dbReference type="SMR" id="Q7U620"/>
<dbReference type="STRING" id="84588.SYNW1521"/>
<dbReference type="KEGG" id="syw:SYNW1521"/>
<dbReference type="eggNOG" id="ENOG5032ZM4">
    <property type="taxonomic scope" value="Bacteria"/>
</dbReference>
<dbReference type="HOGENOM" id="CLU_171077_1_0_3"/>
<dbReference type="BioCyc" id="MetaCyc:TX72_RS07640-MONOMER"/>
<dbReference type="Proteomes" id="UP000001422">
    <property type="component" value="Chromosome"/>
</dbReference>
<dbReference type="GO" id="GO:0031676">
    <property type="term" value="C:plasma membrane-derived thylakoid membrane"/>
    <property type="evidence" value="ECO:0007669"/>
    <property type="project" value="UniProtKB-SubCell"/>
</dbReference>
<dbReference type="GO" id="GO:0016655">
    <property type="term" value="F:oxidoreductase activity, acting on NAD(P)H, quinone or similar compound as acceptor"/>
    <property type="evidence" value="ECO:0007669"/>
    <property type="project" value="UniProtKB-UniRule"/>
</dbReference>
<dbReference type="GO" id="GO:0048038">
    <property type="term" value="F:quinone binding"/>
    <property type="evidence" value="ECO:0007669"/>
    <property type="project" value="UniProtKB-KW"/>
</dbReference>
<dbReference type="HAMAP" id="MF_01355">
    <property type="entry name" value="NDH1_NDH1L"/>
    <property type="match status" value="1"/>
</dbReference>
<dbReference type="InterPro" id="IPR019654">
    <property type="entry name" value="NADH-quinone_OxRdatse_su_L"/>
</dbReference>
<dbReference type="PANTHER" id="PTHR36727">
    <property type="entry name" value="NAD(P)H-QUINONE OXIDOREDUCTASE SUBUNIT L, CHLOROPLASTIC"/>
    <property type="match status" value="1"/>
</dbReference>
<dbReference type="PANTHER" id="PTHR36727:SF2">
    <property type="entry name" value="NAD(P)H-QUINONE OXIDOREDUCTASE SUBUNIT L, CHLOROPLASTIC"/>
    <property type="match status" value="1"/>
</dbReference>
<dbReference type="Pfam" id="PF10716">
    <property type="entry name" value="NdhL"/>
    <property type="match status" value="1"/>
</dbReference>
<comment type="function">
    <text evidence="1">NDH-1 shuttles electrons from an unknown electron donor, via FMN and iron-sulfur (Fe-S) centers, to quinones in the respiratory and/or the photosynthetic chain. The immediate electron acceptor for the enzyme in this species is believed to be plastoquinone. Couples the redox reaction to proton translocation, and thus conserves the redox energy in a proton gradient. Cyanobacterial NDH-1 also plays a role in inorganic carbon-concentration.</text>
</comment>
<comment type="catalytic activity">
    <reaction evidence="1">
        <text>a plastoquinone + NADH + (n+1) H(+)(in) = a plastoquinol + NAD(+) + n H(+)(out)</text>
        <dbReference type="Rhea" id="RHEA:42608"/>
        <dbReference type="Rhea" id="RHEA-COMP:9561"/>
        <dbReference type="Rhea" id="RHEA-COMP:9562"/>
        <dbReference type="ChEBI" id="CHEBI:15378"/>
        <dbReference type="ChEBI" id="CHEBI:17757"/>
        <dbReference type="ChEBI" id="CHEBI:57540"/>
        <dbReference type="ChEBI" id="CHEBI:57945"/>
        <dbReference type="ChEBI" id="CHEBI:62192"/>
    </reaction>
</comment>
<comment type="catalytic activity">
    <reaction evidence="1">
        <text>a plastoquinone + NADPH + (n+1) H(+)(in) = a plastoquinol + NADP(+) + n H(+)(out)</text>
        <dbReference type="Rhea" id="RHEA:42612"/>
        <dbReference type="Rhea" id="RHEA-COMP:9561"/>
        <dbReference type="Rhea" id="RHEA-COMP:9562"/>
        <dbReference type="ChEBI" id="CHEBI:15378"/>
        <dbReference type="ChEBI" id="CHEBI:17757"/>
        <dbReference type="ChEBI" id="CHEBI:57783"/>
        <dbReference type="ChEBI" id="CHEBI:58349"/>
        <dbReference type="ChEBI" id="CHEBI:62192"/>
    </reaction>
</comment>
<comment type="subunit">
    <text evidence="1">NDH-1 can be composed of about 15 different subunits; different subcomplexes with different compositions have been identified which probably have different functions.</text>
</comment>
<comment type="subcellular location">
    <subcellularLocation>
        <location evidence="1">Cellular thylakoid membrane</location>
        <topology evidence="1">Multi-pass membrane protein</topology>
    </subcellularLocation>
</comment>
<comment type="similarity">
    <text evidence="1">Belongs to the complex I NdhL subunit family.</text>
</comment>
<protein>
    <recommendedName>
        <fullName evidence="1">NAD(P)H-quinone oxidoreductase subunit L</fullName>
        <ecNumber evidence="1">7.1.1.-</ecNumber>
    </recommendedName>
    <alternativeName>
        <fullName evidence="1">NAD(P)H dehydrogenase I subunit L</fullName>
    </alternativeName>
    <alternativeName>
        <fullName>NDH-1 subunit L</fullName>
    </alternativeName>
    <alternativeName>
        <fullName>NDH-L</fullName>
    </alternativeName>
</protein>
<gene>
    <name evidence="1" type="primary">ndhL</name>
    <name type="ordered locus">SYNW1521</name>
</gene>
<organism>
    <name type="scientific">Parasynechococcus marenigrum (strain WH8102)</name>
    <dbReference type="NCBI Taxonomy" id="84588"/>
    <lineage>
        <taxon>Bacteria</taxon>
        <taxon>Bacillati</taxon>
        <taxon>Cyanobacteriota</taxon>
        <taxon>Cyanophyceae</taxon>
        <taxon>Synechococcales</taxon>
        <taxon>Prochlorococcaceae</taxon>
        <taxon>Parasynechococcus</taxon>
        <taxon>Parasynechococcus marenigrum</taxon>
    </lineage>
</organism>
<name>NDHL_PARMW</name>
<proteinExistence type="inferred from homology"/>
<feature type="chain" id="PRO_0000353694" description="NAD(P)H-quinone oxidoreductase subunit L">
    <location>
        <begin position="1"/>
        <end position="83"/>
    </location>
</feature>
<feature type="transmembrane region" description="Helical" evidence="1">
    <location>
        <begin position="18"/>
        <end position="38"/>
    </location>
</feature>
<feature type="transmembrane region" description="Helical" evidence="1">
    <location>
        <begin position="53"/>
        <end position="73"/>
    </location>
</feature>
<sequence>MDLQSLASSIPQDTLLVILAYALLGGLYLLVVPLALFFWMNSRWTRMGKIERLLVYGLVFLFFPGMVVFAPFLNFRLSGQGDN</sequence>
<accession>Q7U620</accession>